<accession>Q0SM47</accession>
<accession>G0IRY6</accession>
<comment type="function">
    <text evidence="1">One of the primary rRNA binding proteins, it binds directly to 16S rRNA where it helps nucleate assembly of the platform of the 30S subunit by binding and bridging several RNA helices of the 16S rRNA.</text>
</comment>
<comment type="function">
    <text evidence="1">Forms an intersubunit bridge (bridge B4) with the 23S rRNA of the 50S subunit in the ribosome.</text>
</comment>
<comment type="subunit">
    <text evidence="1">Part of the 30S ribosomal subunit. Forms a bridge to the 50S subunit in the 70S ribosome, contacting the 23S rRNA.</text>
</comment>
<comment type="similarity">
    <text evidence="1">Belongs to the universal ribosomal protein uS15 family.</text>
</comment>
<evidence type="ECO:0000255" key="1">
    <source>
        <dbReference type="HAMAP-Rule" id="MF_01343"/>
    </source>
</evidence>
<evidence type="ECO:0000305" key="2"/>
<dbReference type="EMBL" id="CP000395">
    <property type="protein sequence ID" value="ABH02081.1"/>
    <property type="molecule type" value="Genomic_DNA"/>
</dbReference>
<dbReference type="EMBL" id="CP002933">
    <property type="protein sequence ID" value="AEL70021.1"/>
    <property type="molecule type" value="Genomic_DNA"/>
</dbReference>
<dbReference type="RefSeq" id="WP_004789461.1">
    <property type="nucleotide sequence ID" value="NZ_CP160066.1"/>
</dbReference>
<dbReference type="SMR" id="Q0SM47"/>
<dbReference type="STRING" id="29518.BLA32_00200"/>
<dbReference type="GeneID" id="77265660"/>
<dbReference type="KEGG" id="baf:BAPKO_0857"/>
<dbReference type="KEGG" id="bafz:BafPKo_0832"/>
<dbReference type="PATRIC" id="fig|390236.22.peg.793"/>
<dbReference type="eggNOG" id="COG0184">
    <property type="taxonomic scope" value="Bacteria"/>
</dbReference>
<dbReference type="HOGENOM" id="CLU_148518_0_0_12"/>
<dbReference type="OrthoDB" id="9799262at2"/>
<dbReference type="Proteomes" id="UP000005216">
    <property type="component" value="Chromosome"/>
</dbReference>
<dbReference type="GO" id="GO:0022627">
    <property type="term" value="C:cytosolic small ribosomal subunit"/>
    <property type="evidence" value="ECO:0007669"/>
    <property type="project" value="TreeGrafter"/>
</dbReference>
<dbReference type="GO" id="GO:0019843">
    <property type="term" value="F:rRNA binding"/>
    <property type="evidence" value="ECO:0007669"/>
    <property type="project" value="UniProtKB-UniRule"/>
</dbReference>
<dbReference type="GO" id="GO:0003735">
    <property type="term" value="F:structural constituent of ribosome"/>
    <property type="evidence" value="ECO:0007669"/>
    <property type="project" value="InterPro"/>
</dbReference>
<dbReference type="GO" id="GO:0006412">
    <property type="term" value="P:translation"/>
    <property type="evidence" value="ECO:0007669"/>
    <property type="project" value="UniProtKB-UniRule"/>
</dbReference>
<dbReference type="CDD" id="cd00353">
    <property type="entry name" value="Ribosomal_S15p_S13e"/>
    <property type="match status" value="1"/>
</dbReference>
<dbReference type="FunFam" id="1.10.287.10:FF:000002">
    <property type="entry name" value="30S ribosomal protein S15"/>
    <property type="match status" value="1"/>
</dbReference>
<dbReference type="Gene3D" id="6.10.250.3130">
    <property type="match status" value="1"/>
</dbReference>
<dbReference type="Gene3D" id="1.10.287.10">
    <property type="entry name" value="S15/NS1, RNA-binding"/>
    <property type="match status" value="1"/>
</dbReference>
<dbReference type="HAMAP" id="MF_01343_B">
    <property type="entry name" value="Ribosomal_uS15_B"/>
    <property type="match status" value="1"/>
</dbReference>
<dbReference type="InterPro" id="IPR000589">
    <property type="entry name" value="Ribosomal_uS15"/>
</dbReference>
<dbReference type="InterPro" id="IPR005290">
    <property type="entry name" value="Ribosomal_uS15_bac-type"/>
</dbReference>
<dbReference type="InterPro" id="IPR009068">
    <property type="entry name" value="uS15_NS1_RNA-bd_sf"/>
</dbReference>
<dbReference type="NCBIfam" id="TIGR00952">
    <property type="entry name" value="S15_bact"/>
    <property type="match status" value="1"/>
</dbReference>
<dbReference type="PANTHER" id="PTHR23321">
    <property type="entry name" value="RIBOSOMAL PROTEIN S15, BACTERIAL AND ORGANELLAR"/>
    <property type="match status" value="1"/>
</dbReference>
<dbReference type="PANTHER" id="PTHR23321:SF26">
    <property type="entry name" value="SMALL RIBOSOMAL SUBUNIT PROTEIN US15M"/>
    <property type="match status" value="1"/>
</dbReference>
<dbReference type="Pfam" id="PF00312">
    <property type="entry name" value="Ribosomal_S15"/>
    <property type="match status" value="1"/>
</dbReference>
<dbReference type="SMART" id="SM01387">
    <property type="entry name" value="Ribosomal_S15"/>
    <property type="match status" value="1"/>
</dbReference>
<dbReference type="SUPFAM" id="SSF47060">
    <property type="entry name" value="S15/NS1 RNA-binding domain"/>
    <property type="match status" value="1"/>
</dbReference>
<dbReference type="PROSITE" id="PS00362">
    <property type="entry name" value="RIBOSOMAL_S15"/>
    <property type="match status" value="1"/>
</dbReference>
<organism>
    <name type="scientific">Borreliella afzelii (strain PKo)</name>
    <name type="common">Borrelia afzelii</name>
    <dbReference type="NCBI Taxonomy" id="390236"/>
    <lineage>
        <taxon>Bacteria</taxon>
        <taxon>Pseudomonadati</taxon>
        <taxon>Spirochaetota</taxon>
        <taxon>Spirochaetia</taxon>
        <taxon>Spirochaetales</taxon>
        <taxon>Borreliaceae</taxon>
        <taxon>Borreliella</taxon>
    </lineage>
</organism>
<reference key="1">
    <citation type="journal article" date="2006" name="BMC Genomics">
        <title>Comparative genome analysis: selection pressure on the Borrelia vls cassettes is essential for infectivity.</title>
        <authorList>
            <person name="Gloeckner G."/>
            <person name="Schulte-Spechtel U."/>
            <person name="Schilhabel M."/>
            <person name="Felder M."/>
            <person name="Suehnel J."/>
            <person name="Wilske B."/>
            <person name="Platzer M."/>
        </authorList>
    </citation>
    <scope>NUCLEOTIDE SEQUENCE [LARGE SCALE GENOMIC DNA]</scope>
    <source>
        <strain>PKo</strain>
    </source>
</reference>
<reference key="2">
    <citation type="journal article" date="2011" name="J. Bacteriol.">
        <title>Whole-genome sequences of two Borrelia afzelii and two Borrelia garinii Lyme disease agent isolates.</title>
        <authorList>
            <person name="Casjens S.R."/>
            <person name="Mongodin E.F."/>
            <person name="Qiu W.G."/>
            <person name="Dunn J.J."/>
            <person name="Luft B.J."/>
            <person name="Fraser-Liggett C.M."/>
            <person name="Schutzer S.E."/>
        </authorList>
    </citation>
    <scope>NUCLEOTIDE SEQUENCE [LARGE SCALE GENOMIC DNA]</scope>
    <source>
        <strain>PKo</strain>
    </source>
</reference>
<name>RS15_BORAP</name>
<gene>
    <name evidence="1" type="primary">rpsO</name>
    <name type="ordered locus">BAPKO_0857</name>
    <name type="ordered locus">BafPKo_0832</name>
</gene>
<sequence>MIDKKQKQKIVSEFGKNEGDTGSVGVQIALITGRIKYLTEHLKINKKDHSSKRGLLKLVGQRRSLLQYYQKKDLEAYRALISKLGLRK</sequence>
<protein>
    <recommendedName>
        <fullName evidence="1">Small ribosomal subunit protein uS15</fullName>
    </recommendedName>
    <alternativeName>
        <fullName evidence="2">30S ribosomal protein S15</fullName>
    </alternativeName>
</protein>
<feature type="chain" id="PRO_1000054754" description="Small ribosomal subunit protein uS15">
    <location>
        <begin position="1"/>
        <end position="88"/>
    </location>
</feature>
<proteinExistence type="inferred from homology"/>
<keyword id="KW-0687">Ribonucleoprotein</keyword>
<keyword id="KW-0689">Ribosomal protein</keyword>
<keyword id="KW-0694">RNA-binding</keyword>
<keyword id="KW-0699">rRNA-binding</keyword>